<gene>
    <name type="ordered locus">MIMI_R765</name>
</gene>
<organism>
    <name type="scientific">Acanthamoeba polyphaga mimivirus</name>
    <name type="common">APMV</name>
    <dbReference type="NCBI Taxonomy" id="212035"/>
    <lineage>
        <taxon>Viruses</taxon>
        <taxon>Varidnaviria</taxon>
        <taxon>Bamfordvirae</taxon>
        <taxon>Nucleocytoviricota</taxon>
        <taxon>Megaviricetes</taxon>
        <taxon>Imitervirales</taxon>
        <taxon>Mimiviridae</taxon>
        <taxon>Megamimivirinae</taxon>
        <taxon>Mimivirus</taxon>
        <taxon>Mimivirus bradfordmassiliense</taxon>
    </lineage>
</organism>
<dbReference type="EMBL" id="AY653733">
    <property type="protein sequence ID" value="AAV51025.1"/>
    <property type="molecule type" value="Genomic_DNA"/>
</dbReference>
<dbReference type="Proteomes" id="UP000001134">
    <property type="component" value="Genome"/>
</dbReference>
<dbReference type="CDD" id="cd18186">
    <property type="entry name" value="BTB_POZ_ZBTB_KLHL-like"/>
    <property type="match status" value="1"/>
</dbReference>
<dbReference type="Gene3D" id="3.30.710.10">
    <property type="entry name" value="Potassium Channel Kv1.1, Chain A"/>
    <property type="match status" value="1"/>
</dbReference>
<dbReference type="Gene3D" id="2.130.10.10">
    <property type="entry name" value="YVTN repeat-like/Quinoprotein amine dehydrogenase"/>
    <property type="match status" value="1"/>
</dbReference>
<dbReference type="InterPro" id="IPR000210">
    <property type="entry name" value="BTB/POZ_dom"/>
</dbReference>
<dbReference type="InterPro" id="IPR011047">
    <property type="entry name" value="Quinoprotein_ADH-like_sf"/>
</dbReference>
<dbReference type="InterPro" id="IPR011333">
    <property type="entry name" value="SKP1/BTB/POZ_sf"/>
</dbReference>
<dbReference type="InterPro" id="IPR015943">
    <property type="entry name" value="WD40/YVTN_repeat-like_dom_sf"/>
</dbReference>
<dbReference type="Pfam" id="PF00651">
    <property type="entry name" value="BTB"/>
    <property type="match status" value="1"/>
</dbReference>
<dbReference type="SUPFAM" id="SSF50998">
    <property type="entry name" value="Quinoprotein alcohol dehydrogenase-like"/>
    <property type="match status" value="1"/>
</dbReference>
<organismHost>
    <name type="scientific">Acanthamoeba polyphaga</name>
    <name type="common">Amoeba</name>
    <dbReference type="NCBI Taxonomy" id="5757"/>
</organismHost>
<protein>
    <recommendedName>
        <fullName>Putative BTB/POZ domain-containing protein R765</fullName>
    </recommendedName>
</protein>
<accession>Q5UPQ3</accession>
<evidence type="ECO:0000305" key="1"/>
<feature type="chain" id="PRO_0000186234" description="Putative BTB/POZ domain-containing protein R765">
    <location>
        <begin position="1"/>
        <end position="473"/>
    </location>
</feature>
<feature type="domain" description="BTB">
    <location>
        <begin position="2"/>
        <end position="72"/>
    </location>
</feature>
<sequence length="473" mass="55406">MTNIQLVIKDDSNSITLNVNRDTLCSKIDYFNKMFNNFAESTKEIVSIYVLNAQIVRDLIDSKIYDREITADKKNWKYILDLYKCQDYFGIEIDSELMKDLLVPREYFGHLIDVIDLIGYNKHTVNTVVQNIPIDFNVKVFPPKLINKMVPVITDSIKVFGSKTSIDIVCLKTREIIYSLPTIGSLCNCFCYVKNKKMVFFINELSQLVAFDIRYGTSNIISLRIKKEDFNTNPYYRKNILLTDVLYRRNSDLQIIPTVNILYNKISNQLIFCHNHKHVVIIDVESYRVINMYTHSNYFDVNIDNICRYVNHNTLAINHSSNIIALWNLESYEIHTRPKPNGIINLTALIYYNTYIYKNKFQKIFVNEFYLPNKPFELKPKHSGEITFVGCSPDNKYIVIVVDYCQITIFDMEYTLSLYASCKCVSRTYIRYEYPLSIIFGSNNTMSILFETNKKNIVHVYSLKSKKSLKNYV</sequence>
<keyword id="KW-1185">Reference proteome</keyword>
<comment type="similarity">
    <text evidence="1">Belongs to the mimivirus BTB/WD family.</text>
</comment>
<reference key="1">
    <citation type="journal article" date="2004" name="Science">
        <title>The 1.2-megabase genome sequence of Mimivirus.</title>
        <authorList>
            <person name="Raoult D."/>
            <person name="Audic S."/>
            <person name="Robert C."/>
            <person name="Abergel C."/>
            <person name="Renesto P."/>
            <person name="Ogata H."/>
            <person name="La Scola B."/>
            <person name="Susan M."/>
            <person name="Claverie J.-M."/>
        </authorList>
    </citation>
    <scope>NUCLEOTIDE SEQUENCE [LARGE SCALE GENOMIC DNA]</scope>
    <source>
        <strain>Rowbotham-Bradford</strain>
    </source>
</reference>
<proteinExistence type="inferred from homology"/>
<name>YR765_MIMIV</name>